<proteinExistence type="inferred from homology"/>
<protein>
    <recommendedName>
        <fullName evidence="1">Putative membrane protein insertion efficiency factor</fullName>
    </recommendedName>
</protein>
<sequence length="86" mass="9626">MASSLSLGSKILILLIRGYQLGISPLLGPRCRFNPTCSHYGIEALRRFGMIKGSWLTVKRILKCHPLHEGGDDPVPPRKNDDNREN</sequence>
<evidence type="ECO:0000255" key="1">
    <source>
        <dbReference type="HAMAP-Rule" id="MF_00386"/>
    </source>
</evidence>
<evidence type="ECO:0000256" key="2">
    <source>
        <dbReference type="SAM" id="MobiDB-lite"/>
    </source>
</evidence>
<reference key="1">
    <citation type="journal article" date="2008" name="J. Bacteriol.">
        <title>Complete genome sequence of uropathogenic Proteus mirabilis, a master of both adherence and motility.</title>
        <authorList>
            <person name="Pearson M.M."/>
            <person name="Sebaihia M."/>
            <person name="Churcher C."/>
            <person name="Quail M.A."/>
            <person name="Seshasayee A.S."/>
            <person name="Luscombe N.M."/>
            <person name="Abdellah Z."/>
            <person name="Arrosmith C."/>
            <person name="Atkin B."/>
            <person name="Chillingworth T."/>
            <person name="Hauser H."/>
            <person name="Jagels K."/>
            <person name="Moule S."/>
            <person name="Mungall K."/>
            <person name="Norbertczak H."/>
            <person name="Rabbinowitsch E."/>
            <person name="Walker D."/>
            <person name="Whithead S."/>
            <person name="Thomson N.R."/>
            <person name="Rather P.N."/>
            <person name="Parkhill J."/>
            <person name="Mobley H.L.T."/>
        </authorList>
    </citation>
    <scope>NUCLEOTIDE SEQUENCE [LARGE SCALE GENOMIC DNA]</scope>
    <source>
        <strain>HI4320</strain>
    </source>
</reference>
<keyword id="KW-0997">Cell inner membrane</keyword>
<keyword id="KW-1003">Cell membrane</keyword>
<keyword id="KW-0472">Membrane</keyword>
<keyword id="KW-1185">Reference proteome</keyword>
<name>YIDD_PROMH</name>
<dbReference type="EMBL" id="AM942759">
    <property type="protein sequence ID" value="CAR46146.1"/>
    <property type="molecule type" value="Genomic_DNA"/>
</dbReference>
<dbReference type="EnsemblBacteria" id="CAR46146">
    <property type="protein sequence ID" value="CAR46146"/>
    <property type="gene ID" value="PMI3129"/>
</dbReference>
<dbReference type="KEGG" id="pmr:PMI3129"/>
<dbReference type="eggNOG" id="COG0759">
    <property type="taxonomic scope" value="Bacteria"/>
</dbReference>
<dbReference type="HOGENOM" id="CLU_144811_6_0_6"/>
<dbReference type="Proteomes" id="UP000008319">
    <property type="component" value="Chromosome"/>
</dbReference>
<dbReference type="GO" id="GO:0005886">
    <property type="term" value="C:plasma membrane"/>
    <property type="evidence" value="ECO:0007669"/>
    <property type="project" value="UniProtKB-SubCell"/>
</dbReference>
<dbReference type="HAMAP" id="MF_00386">
    <property type="entry name" value="UPF0161_YidD"/>
    <property type="match status" value="1"/>
</dbReference>
<dbReference type="InterPro" id="IPR002696">
    <property type="entry name" value="Membr_insert_effic_factor_YidD"/>
</dbReference>
<dbReference type="NCBIfam" id="TIGR00278">
    <property type="entry name" value="membrane protein insertion efficiency factor YidD"/>
    <property type="match status" value="1"/>
</dbReference>
<dbReference type="PANTHER" id="PTHR33383">
    <property type="entry name" value="MEMBRANE PROTEIN INSERTION EFFICIENCY FACTOR-RELATED"/>
    <property type="match status" value="1"/>
</dbReference>
<dbReference type="PANTHER" id="PTHR33383:SF1">
    <property type="entry name" value="MEMBRANE PROTEIN INSERTION EFFICIENCY FACTOR-RELATED"/>
    <property type="match status" value="1"/>
</dbReference>
<dbReference type="Pfam" id="PF01809">
    <property type="entry name" value="YidD"/>
    <property type="match status" value="1"/>
</dbReference>
<dbReference type="SMART" id="SM01234">
    <property type="entry name" value="Haemolytic"/>
    <property type="match status" value="1"/>
</dbReference>
<comment type="function">
    <text evidence="1">Could be involved in insertion of integral membrane proteins into the membrane.</text>
</comment>
<comment type="subcellular location">
    <subcellularLocation>
        <location evidence="1">Cell inner membrane</location>
        <topology evidence="1">Peripheral membrane protein</topology>
        <orientation evidence="1">Cytoplasmic side</orientation>
    </subcellularLocation>
</comment>
<comment type="similarity">
    <text evidence="1">Belongs to the UPF0161 family.</text>
</comment>
<accession>B4F0U2</accession>
<gene>
    <name type="ordered locus">PMI3129</name>
</gene>
<organism>
    <name type="scientific">Proteus mirabilis (strain HI4320)</name>
    <dbReference type="NCBI Taxonomy" id="529507"/>
    <lineage>
        <taxon>Bacteria</taxon>
        <taxon>Pseudomonadati</taxon>
        <taxon>Pseudomonadota</taxon>
        <taxon>Gammaproteobacteria</taxon>
        <taxon>Enterobacterales</taxon>
        <taxon>Morganellaceae</taxon>
        <taxon>Proteus</taxon>
    </lineage>
</organism>
<feature type="chain" id="PRO_1000197771" description="Putative membrane protein insertion efficiency factor">
    <location>
        <begin position="1"/>
        <end position="86"/>
    </location>
</feature>
<feature type="region of interest" description="Disordered" evidence="2">
    <location>
        <begin position="66"/>
        <end position="86"/>
    </location>
</feature>